<reference key="1">
    <citation type="journal article" date="1997" name="Int. J. Cancer">
        <title>SSX: a multigene family with several members transcribed in normal testis and human cancer.</title>
        <authorList>
            <person name="Gure A.O."/>
            <person name="Tuereci O."/>
            <person name="Sahin U."/>
            <person name="Tsang S."/>
            <person name="Scanlan M.J."/>
            <person name="Jager E."/>
            <person name="Knuth A."/>
            <person name="Pfreundschuh M."/>
            <person name="Old L.J."/>
            <person name="Chen Y.-T."/>
        </authorList>
    </citation>
    <scope>NUCLEOTIDE SEQUENCE [MRNA] (ISOFORM 1)</scope>
    <scope>VARIANT GLN-19</scope>
</reference>
<reference key="2">
    <citation type="journal article" date="2005" name="Nature">
        <title>The DNA sequence of the human X chromosome.</title>
        <authorList>
            <person name="Ross M.T."/>
            <person name="Grafham D.V."/>
            <person name="Coffey A.J."/>
            <person name="Scherer S."/>
            <person name="McLay K."/>
            <person name="Muzny D."/>
            <person name="Platzer M."/>
            <person name="Howell G.R."/>
            <person name="Burrows C."/>
            <person name="Bird C.P."/>
            <person name="Frankish A."/>
            <person name="Lovell F.L."/>
            <person name="Howe K.L."/>
            <person name="Ashurst J.L."/>
            <person name="Fulton R.S."/>
            <person name="Sudbrak R."/>
            <person name="Wen G."/>
            <person name="Jones M.C."/>
            <person name="Hurles M.E."/>
            <person name="Andrews T.D."/>
            <person name="Scott C.E."/>
            <person name="Searle S."/>
            <person name="Ramser J."/>
            <person name="Whittaker A."/>
            <person name="Deadman R."/>
            <person name="Carter N.P."/>
            <person name="Hunt S.E."/>
            <person name="Chen R."/>
            <person name="Cree A."/>
            <person name="Gunaratne P."/>
            <person name="Havlak P."/>
            <person name="Hodgson A."/>
            <person name="Metzker M.L."/>
            <person name="Richards S."/>
            <person name="Scott G."/>
            <person name="Steffen D."/>
            <person name="Sodergren E."/>
            <person name="Wheeler D.A."/>
            <person name="Worley K.C."/>
            <person name="Ainscough R."/>
            <person name="Ambrose K.D."/>
            <person name="Ansari-Lari M.A."/>
            <person name="Aradhya S."/>
            <person name="Ashwell R.I."/>
            <person name="Babbage A.K."/>
            <person name="Bagguley C.L."/>
            <person name="Ballabio A."/>
            <person name="Banerjee R."/>
            <person name="Barker G.E."/>
            <person name="Barlow K.F."/>
            <person name="Barrett I.P."/>
            <person name="Bates K.N."/>
            <person name="Beare D.M."/>
            <person name="Beasley H."/>
            <person name="Beasley O."/>
            <person name="Beck A."/>
            <person name="Bethel G."/>
            <person name="Blechschmidt K."/>
            <person name="Brady N."/>
            <person name="Bray-Allen S."/>
            <person name="Bridgeman A.M."/>
            <person name="Brown A.J."/>
            <person name="Brown M.J."/>
            <person name="Bonnin D."/>
            <person name="Bruford E.A."/>
            <person name="Buhay C."/>
            <person name="Burch P."/>
            <person name="Burford D."/>
            <person name="Burgess J."/>
            <person name="Burrill W."/>
            <person name="Burton J."/>
            <person name="Bye J.M."/>
            <person name="Carder C."/>
            <person name="Carrel L."/>
            <person name="Chako J."/>
            <person name="Chapman J.C."/>
            <person name="Chavez D."/>
            <person name="Chen E."/>
            <person name="Chen G."/>
            <person name="Chen Y."/>
            <person name="Chen Z."/>
            <person name="Chinault C."/>
            <person name="Ciccodicola A."/>
            <person name="Clark S.Y."/>
            <person name="Clarke G."/>
            <person name="Clee C.M."/>
            <person name="Clegg S."/>
            <person name="Clerc-Blankenburg K."/>
            <person name="Clifford K."/>
            <person name="Cobley V."/>
            <person name="Cole C.G."/>
            <person name="Conquer J.S."/>
            <person name="Corby N."/>
            <person name="Connor R.E."/>
            <person name="David R."/>
            <person name="Davies J."/>
            <person name="Davis C."/>
            <person name="Davis J."/>
            <person name="Delgado O."/>
            <person name="Deshazo D."/>
            <person name="Dhami P."/>
            <person name="Ding Y."/>
            <person name="Dinh H."/>
            <person name="Dodsworth S."/>
            <person name="Draper H."/>
            <person name="Dugan-Rocha S."/>
            <person name="Dunham A."/>
            <person name="Dunn M."/>
            <person name="Durbin K.J."/>
            <person name="Dutta I."/>
            <person name="Eades T."/>
            <person name="Ellwood M."/>
            <person name="Emery-Cohen A."/>
            <person name="Errington H."/>
            <person name="Evans K.L."/>
            <person name="Faulkner L."/>
            <person name="Francis F."/>
            <person name="Frankland J."/>
            <person name="Fraser A.E."/>
            <person name="Galgoczy P."/>
            <person name="Gilbert J."/>
            <person name="Gill R."/>
            <person name="Gloeckner G."/>
            <person name="Gregory S.G."/>
            <person name="Gribble S."/>
            <person name="Griffiths C."/>
            <person name="Grocock R."/>
            <person name="Gu Y."/>
            <person name="Gwilliam R."/>
            <person name="Hamilton C."/>
            <person name="Hart E.A."/>
            <person name="Hawes A."/>
            <person name="Heath P.D."/>
            <person name="Heitmann K."/>
            <person name="Hennig S."/>
            <person name="Hernandez J."/>
            <person name="Hinzmann B."/>
            <person name="Ho S."/>
            <person name="Hoffs M."/>
            <person name="Howden P.J."/>
            <person name="Huckle E.J."/>
            <person name="Hume J."/>
            <person name="Hunt P.J."/>
            <person name="Hunt A.R."/>
            <person name="Isherwood J."/>
            <person name="Jacob L."/>
            <person name="Johnson D."/>
            <person name="Jones S."/>
            <person name="de Jong P.J."/>
            <person name="Joseph S.S."/>
            <person name="Keenan S."/>
            <person name="Kelly S."/>
            <person name="Kershaw J.K."/>
            <person name="Khan Z."/>
            <person name="Kioschis P."/>
            <person name="Klages S."/>
            <person name="Knights A.J."/>
            <person name="Kosiura A."/>
            <person name="Kovar-Smith C."/>
            <person name="Laird G.K."/>
            <person name="Langford C."/>
            <person name="Lawlor S."/>
            <person name="Leversha M."/>
            <person name="Lewis L."/>
            <person name="Liu W."/>
            <person name="Lloyd C."/>
            <person name="Lloyd D.M."/>
            <person name="Loulseged H."/>
            <person name="Loveland J.E."/>
            <person name="Lovell J.D."/>
            <person name="Lozado R."/>
            <person name="Lu J."/>
            <person name="Lyne R."/>
            <person name="Ma J."/>
            <person name="Maheshwari M."/>
            <person name="Matthews L.H."/>
            <person name="McDowall J."/>
            <person name="McLaren S."/>
            <person name="McMurray A."/>
            <person name="Meidl P."/>
            <person name="Meitinger T."/>
            <person name="Milne S."/>
            <person name="Miner G."/>
            <person name="Mistry S.L."/>
            <person name="Morgan M."/>
            <person name="Morris S."/>
            <person name="Mueller I."/>
            <person name="Mullikin J.C."/>
            <person name="Nguyen N."/>
            <person name="Nordsiek G."/>
            <person name="Nyakatura G."/>
            <person name="O'dell C.N."/>
            <person name="Okwuonu G."/>
            <person name="Palmer S."/>
            <person name="Pandian R."/>
            <person name="Parker D."/>
            <person name="Parrish J."/>
            <person name="Pasternak S."/>
            <person name="Patel D."/>
            <person name="Pearce A.V."/>
            <person name="Pearson D.M."/>
            <person name="Pelan S.E."/>
            <person name="Perez L."/>
            <person name="Porter K.M."/>
            <person name="Ramsey Y."/>
            <person name="Reichwald K."/>
            <person name="Rhodes S."/>
            <person name="Ridler K.A."/>
            <person name="Schlessinger D."/>
            <person name="Schueler M.G."/>
            <person name="Sehra H.K."/>
            <person name="Shaw-Smith C."/>
            <person name="Shen H."/>
            <person name="Sheridan E.M."/>
            <person name="Shownkeen R."/>
            <person name="Skuce C.D."/>
            <person name="Smith M.L."/>
            <person name="Sotheran E.C."/>
            <person name="Steingruber H.E."/>
            <person name="Steward C.A."/>
            <person name="Storey R."/>
            <person name="Swann R.M."/>
            <person name="Swarbreck D."/>
            <person name="Tabor P.E."/>
            <person name="Taudien S."/>
            <person name="Taylor T."/>
            <person name="Teague B."/>
            <person name="Thomas K."/>
            <person name="Thorpe A."/>
            <person name="Timms K."/>
            <person name="Tracey A."/>
            <person name="Trevanion S."/>
            <person name="Tromans A.C."/>
            <person name="d'Urso M."/>
            <person name="Verduzco D."/>
            <person name="Villasana D."/>
            <person name="Waldron L."/>
            <person name="Wall M."/>
            <person name="Wang Q."/>
            <person name="Warren J."/>
            <person name="Warry G.L."/>
            <person name="Wei X."/>
            <person name="West A."/>
            <person name="Whitehead S.L."/>
            <person name="Whiteley M.N."/>
            <person name="Wilkinson J.E."/>
            <person name="Willey D.L."/>
            <person name="Williams G."/>
            <person name="Williams L."/>
            <person name="Williamson A."/>
            <person name="Williamson H."/>
            <person name="Wilming L."/>
            <person name="Woodmansey R.L."/>
            <person name="Wray P.W."/>
            <person name="Yen J."/>
            <person name="Zhang J."/>
            <person name="Zhou J."/>
            <person name="Zoghbi H."/>
            <person name="Zorilla S."/>
            <person name="Buck D."/>
            <person name="Reinhardt R."/>
            <person name="Poustka A."/>
            <person name="Rosenthal A."/>
            <person name="Lehrach H."/>
            <person name="Meindl A."/>
            <person name="Minx P.J."/>
            <person name="Hillier L.W."/>
            <person name="Willard H.F."/>
            <person name="Wilson R.K."/>
            <person name="Waterston R.H."/>
            <person name="Rice C.M."/>
            <person name="Vaudin M."/>
            <person name="Coulson A."/>
            <person name="Nelson D.L."/>
            <person name="Weinstock G."/>
            <person name="Sulston J.E."/>
            <person name="Durbin R.M."/>
            <person name="Hubbard T."/>
            <person name="Gibbs R.A."/>
            <person name="Beck S."/>
            <person name="Rogers J."/>
            <person name="Bentley D.R."/>
        </authorList>
    </citation>
    <scope>NUCLEOTIDE SEQUENCE [LARGE SCALE GENOMIC DNA]</scope>
</reference>
<reference key="3">
    <citation type="journal article" date="2004" name="Genome Res.">
        <title>The status, quality, and expansion of the NIH full-length cDNA project: the Mammalian Gene Collection (MGC).</title>
        <authorList>
            <consortium name="The MGC Project Team"/>
        </authorList>
    </citation>
    <scope>NUCLEOTIDE SEQUENCE [LARGE SCALE MRNA] (ISOFORM 2)</scope>
    <scope>VARIANT GLN-19</scope>
    <source>
        <tissue>Skin</tissue>
    </source>
</reference>
<name>SSX5_HUMAN</name>
<protein>
    <recommendedName>
        <fullName>Protein SSX5</fullName>
    </recommendedName>
</protein>
<feature type="chain" id="PRO_0000181832" description="Protein SSX5">
    <location>
        <begin position="1"/>
        <end position="188"/>
    </location>
</feature>
<feature type="domain" description="KRAB-related" evidence="1">
    <location>
        <begin position="20"/>
        <end position="83"/>
    </location>
</feature>
<feature type="region of interest" description="Disordered" evidence="2">
    <location>
        <begin position="78"/>
        <end position="188"/>
    </location>
</feature>
<feature type="compositionally biased region" description="Basic and acidic residues" evidence="2">
    <location>
        <begin position="112"/>
        <end position="122"/>
    </location>
</feature>
<feature type="compositionally biased region" description="Polar residues" evidence="2">
    <location>
        <begin position="144"/>
        <end position="155"/>
    </location>
</feature>
<feature type="compositionally biased region" description="Basic residues" evidence="2">
    <location>
        <begin position="156"/>
        <end position="170"/>
    </location>
</feature>
<feature type="compositionally biased region" description="Acidic residues" evidence="2">
    <location>
        <begin position="179"/>
        <end position="188"/>
    </location>
</feature>
<feature type="splice variant" id="VSP_006274" description="In isoform 2." evidence="5">
    <original>K</original>
    <variation>KHPWRQVCDRGIHLVNLSPFWKVGREPASSIKALLCGRGEAR</variation>
    <location>
        <position position="23"/>
    </location>
</feature>
<feature type="sequence variant" id="VAR_027805" description="In dbSNP:rs4824675." evidence="3 4">
    <original>E</original>
    <variation>Q</variation>
    <location>
        <position position="19"/>
    </location>
</feature>
<feature type="sequence conflict" description="In Ref. 1; AAC05821." evidence="6" ref="1">
    <original>Q</original>
    <variation>P</variation>
    <location>
        <position position="184"/>
    </location>
</feature>
<accession>O60225</accession>
<accession>Q5JQ59</accession>
<accession>Q5JQ60</accession>
<accession>Q96AW3</accession>
<keyword id="KW-0025">Alternative splicing</keyword>
<keyword id="KW-1185">Reference proteome</keyword>
<keyword id="KW-0804">Transcription</keyword>
<keyword id="KW-0805">Transcription regulation</keyword>
<organism>
    <name type="scientific">Homo sapiens</name>
    <name type="common">Human</name>
    <dbReference type="NCBI Taxonomy" id="9606"/>
    <lineage>
        <taxon>Eukaryota</taxon>
        <taxon>Metazoa</taxon>
        <taxon>Chordata</taxon>
        <taxon>Craniata</taxon>
        <taxon>Vertebrata</taxon>
        <taxon>Euteleostomi</taxon>
        <taxon>Mammalia</taxon>
        <taxon>Eutheria</taxon>
        <taxon>Euarchontoglires</taxon>
        <taxon>Primates</taxon>
        <taxon>Haplorrhini</taxon>
        <taxon>Catarrhini</taxon>
        <taxon>Hominidae</taxon>
        <taxon>Homo</taxon>
    </lineage>
</organism>
<sequence length="188" mass="21660">MNGDDAFVRRPRVGSQIPEKMQKAFDDIAKYFSEKEWEKMKASEKIIYVYMKRKYEAMTKLGFKATLPPFMRNKRVADFQGNDFDNDPNRGNQVEHPQMTFGRLQGIFPKITPEKPAEEGNDSKGVPEASGPQNNGKQLRPSGKLNTSEKVNKTSGPKRGKHAWTHRVRERKQLVIYEEISDPQEDDE</sequence>
<comment type="function">
    <text>Could act as a modulator of transcription.</text>
</comment>
<comment type="interaction">
    <interactant intactId="EBI-10186198">
        <id>O60225</id>
    </interactant>
    <interactant intactId="EBI-741181">
        <id>Q6RW13</id>
        <label>AGTRAP</label>
    </interactant>
    <organismsDiffer>false</organismsDiffer>
    <experiments>5</experiments>
</comment>
<comment type="interaction">
    <interactant intactId="EBI-12033476">
        <id>O60225-2</id>
    </interactant>
    <interactant intactId="EBI-11522760">
        <id>Q6RW13-2</id>
        <label>AGTRAP</label>
    </interactant>
    <organismsDiffer>false</organismsDiffer>
    <experiments>3</experiments>
</comment>
<comment type="interaction">
    <interactant intactId="EBI-12033476">
        <id>O60225-2</id>
    </interactant>
    <interactant intactId="EBI-11745576">
        <id>Q6PJH3</id>
        <label>AKAP9</label>
    </interactant>
    <organismsDiffer>false</organismsDiffer>
    <experiments>3</experiments>
</comment>
<comment type="interaction">
    <interactant intactId="EBI-12033476">
        <id>O60225-2</id>
    </interactant>
    <interactant intactId="EBI-11522780">
        <id>Q96DZ9-2</id>
        <label>CMTM5</label>
    </interactant>
    <organismsDiffer>false</organismsDiffer>
    <experiments>3</experiments>
</comment>
<comment type="interaction">
    <interactant intactId="EBI-12033476">
        <id>O60225-2</id>
    </interactant>
    <interactant intactId="EBI-5916454">
        <id>A6NEM1</id>
        <label>GOLGA6L9</label>
    </interactant>
    <organismsDiffer>false</organismsDiffer>
    <experiments>3</experiments>
</comment>
<comment type="interaction">
    <interactant intactId="EBI-12033476">
        <id>O60225-2</id>
    </interactant>
    <interactant intactId="EBI-9071725">
        <id>P08247</id>
        <label>SYP</label>
    </interactant>
    <organismsDiffer>false</organismsDiffer>
    <experiments>3</experiments>
</comment>
<comment type="alternative products">
    <event type="alternative splicing"/>
    <isoform>
        <id>O60225-1</id>
        <name>1</name>
        <sequence type="displayed"/>
    </isoform>
    <isoform>
        <id>O60225-2</id>
        <name>2</name>
        <sequence type="described" ref="VSP_006274"/>
    </isoform>
</comment>
<comment type="similarity">
    <text evidence="6">Belongs to the SSX family.</text>
</comment>
<dbReference type="EMBL" id="U90842">
    <property type="protein sequence ID" value="AAC05821.1"/>
    <property type="molecule type" value="mRNA"/>
</dbReference>
<dbReference type="EMBL" id="AL683817">
    <property type="protein sequence ID" value="CAI41133.1"/>
    <property type="molecule type" value="Genomic_DNA"/>
</dbReference>
<dbReference type="EMBL" id="AL356464">
    <property type="protein sequence ID" value="CAI41133.1"/>
    <property type="status" value="JOINED"/>
    <property type="molecule type" value="Genomic_DNA"/>
</dbReference>
<dbReference type="EMBL" id="AL683817">
    <property type="protein sequence ID" value="CAI41134.1"/>
    <property type="molecule type" value="Genomic_DNA"/>
</dbReference>
<dbReference type="EMBL" id="AL356464">
    <property type="protein sequence ID" value="CAI41134.1"/>
    <property type="status" value="JOINED"/>
    <property type="molecule type" value="Genomic_DNA"/>
</dbReference>
<dbReference type="EMBL" id="AL356464">
    <property type="protein sequence ID" value="CAI40523.1"/>
    <property type="molecule type" value="Genomic_DNA"/>
</dbReference>
<dbReference type="EMBL" id="AL683817">
    <property type="protein sequence ID" value="CAI40523.1"/>
    <property type="status" value="JOINED"/>
    <property type="molecule type" value="Genomic_DNA"/>
</dbReference>
<dbReference type="EMBL" id="AL356464">
    <property type="protein sequence ID" value="CAI40524.1"/>
    <property type="molecule type" value="Genomic_DNA"/>
</dbReference>
<dbReference type="EMBL" id="AL683817">
    <property type="protein sequence ID" value="CAI40524.1"/>
    <property type="status" value="JOINED"/>
    <property type="molecule type" value="Genomic_DNA"/>
</dbReference>
<dbReference type="EMBL" id="BC016640">
    <property type="protein sequence ID" value="AAH16640.1"/>
    <property type="molecule type" value="mRNA"/>
</dbReference>
<dbReference type="CCDS" id="CCDS14288.1">
    <molecule id="O60225-2"/>
</dbReference>
<dbReference type="CCDS" id="CCDS14289.1">
    <molecule id="O60225-1"/>
</dbReference>
<dbReference type="RefSeq" id="NP_066295.3">
    <molecule id="O60225-2"/>
    <property type="nucleotide sequence ID" value="NM_021015.3"/>
</dbReference>
<dbReference type="RefSeq" id="NP_783729.1">
    <molecule id="O60225-1"/>
    <property type="nucleotide sequence ID" value="NM_175723.2"/>
</dbReference>
<dbReference type="RefSeq" id="XP_011542251.1">
    <molecule id="O60225-1"/>
    <property type="nucleotide sequence ID" value="XM_011543949.3"/>
</dbReference>
<dbReference type="RefSeq" id="XP_016885247.1">
    <property type="nucleotide sequence ID" value="XM_017029758.1"/>
</dbReference>
<dbReference type="BioGRID" id="112636">
    <property type="interactions" value="10"/>
</dbReference>
<dbReference type="FunCoup" id="O60225">
    <property type="interactions" value="34"/>
</dbReference>
<dbReference type="IntAct" id="O60225">
    <property type="interactions" value="9"/>
</dbReference>
<dbReference type="STRING" id="9606.ENSP00000312415"/>
<dbReference type="iPTMnet" id="O60225"/>
<dbReference type="PhosphoSitePlus" id="O60225"/>
<dbReference type="BioMuta" id="SSX5"/>
<dbReference type="MassIVE" id="O60225"/>
<dbReference type="PeptideAtlas" id="O60225"/>
<dbReference type="ProteomicsDB" id="49250">
    <molecule id="O60225-1"/>
</dbReference>
<dbReference type="ProteomicsDB" id="49251">
    <molecule id="O60225-2"/>
</dbReference>
<dbReference type="Antibodypedia" id="25586">
    <property type="antibodies" value="292 antibodies from 23 providers"/>
</dbReference>
<dbReference type="DNASU" id="6758"/>
<dbReference type="Ensembl" id="ENST00000311798.5">
    <molecule id="O60225-2"/>
    <property type="protein sequence ID" value="ENSP00000312415.1"/>
    <property type="gene ID" value="ENSG00000165583.16"/>
</dbReference>
<dbReference type="Ensembl" id="ENST00000347757.6">
    <molecule id="O60225-1"/>
    <property type="protein sequence ID" value="ENSP00000290558.1"/>
    <property type="gene ID" value="ENSG00000165583.16"/>
</dbReference>
<dbReference type="GeneID" id="6758"/>
<dbReference type="KEGG" id="hsa:6758"/>
<dbReference type="MANE-Select" id="ENST00000347757.6">
    <property type="protein sequence ID" value="ENSP00000290558.1"/>
    <property type="RefSeq nucleotide sequence ID" value="NM_175723.2"/>
    <property type="RefSeq protein sequence ID" value="NP_783729.1"/>
</dbReference>
<dbReference type="UCSC" id="uc004diz.1">
    <molecule id="O60225-1"/>
    <property type="organism name" value="human"/>
</dbReference>
<dbReference type="AGR" id="HGNC:11339"/>
<dbReference type="CTD" id="6758"/>
<dbReference type="DisGeNET" id="6758"/>
<dbReference type="GeneCards" id="SSX5"/>
<dbReference type="HGNC" id="HGNC:11339">
    <property type="gene designation" value="SSX5"/>
</dbReference>
<dbReference type="HPA" id="ENSG00000165583">
    <property type="expression patterns" value="Not detected"/>
</dbReference>
<dbReference type="MIM" id="300327">
    <property type="type" value="gene"/>
</dbReference>
<dbReference type="neXtProt" id="NX_O60225"/>
<dbReference type="OpenTargets" id="ENSG00000165583"/>
<dbReference type="PharmGKB" id="PA36163"/>
<dbReference type="VEuPathDB" id="HostDB:ENSG00000165583"/>
<dbReference type="GeneTree" id="ENSGT00390000012484"/>
<dbReference type="InParanoid" id="O60225"/>
<dbReference type="OMA" id="ATKSKHC"/>
<dbReference type="OrthoDB" id="9587513at2759"/>
<dbReference type="PAN-GO" id="O60225">
    <property type="GO annotations" value="1 GO annotation based on evolutionary models"/>
</dbReference>
<dbReference type="PhylomeDB" id="O60225"/>
<dbReference type="TreeFam" id="TF338517"/>
<dbReference type="PathwayCommons" id="O60225"/>
<dbReference type="SignaLink" id="O60225"/>
<dbReference type="BioGRID-ORCS" id="6758">
    <property type="hits" value="65 hits in 756 CRISPR screens"/>
</dbReference>
<dbReference type="ChiTaRS" id="SSX5">
    <property type="organism name" value="human"/>
</dbReference>
<dbReference type="GeneWiki" id="SSX5"/>
<dbReference type="GenomeRNAi" id="6758"/>
<dbReference type="Pharos" id="O60225">
    <property type="development level" value="Tdark"/>
</dbReference>
<dbReference type="PRO" id="PR:O60225"/>
<dbReference type="Proteomes" id="UP000005640">
    <property type="component" value="Chromosome X"/>
</dbReference>
<dbReference type="RNAct" id="O60225">
    <property type="molecule type" value="protein"/>
</dbReference>
<dbReference type="Bgee" id="ENSG00000165583">
    <property type="expression patterns" value="Expressed in primordial germ cell in gonad and 38 other cell types or tissues"/>
</dbReference>
<dbReference type="GO" id="GO:0005634">
    <property type="term" value="C:nucleus"/>
    <property type="evidence" value="ECO:0000318"/>
    <property type="project" value="GO_Central"/>
</dbReference>
<dbReference type="GO" id="GO:0006355">
    <property type="term" value="P:regulation of DNA-templated transcription"/>
    <property type="evidence" value="ECO:0007669"/>
    <property type="project" value="InterPro"/>
</dbReference>
<dbReference type="InterPro" id="IPR003655">
    <property type="entry name" value="aKRAB"/>
</dbReference>
<dbReference type="InterPro" id="IPR001909">
    <property type="entry name" value="KRAB"/>
</dbReference>
<dbReference type="InterPro" id="IPR036051">
    <property type="entry name" value="KRAB_dom_sf"/>
</dbReference>
<dbReference type="InterPro" id="IPR019041">
    <property type="entry name" value="SSXRD_motif"/>
</dbReference>
<dbReference type="PANTHER" id="PTHR14112:SF23">
    <property type="entry name" value="PROTEIN SSX5"/>
    <property type="match status" value="1"/>
</dbReference>
<dbReference type="PANTHER" id="PTHR14112">
    <property type="entry name" value="SYNOVIAL SARCOMA, X MEMBER"/>
    <property type="match status" value="1"/>
</dbReference>
<dbReference type="Pfam" id="PF09514">
    <property type="entry name" value="SSXRD"/>
    <property type="match status" value="1"/>
</dbReference>
<dbReference type="SMART" id="SM00349">
    <property type="entry name" value="KRAB"/>
    <property type="match status" value="1"/>
</dbReference>
<dbReference type="SUPFAM" id="SSF109640">
    <property type="entry name" value="KRAB domain (Kruppel-associated box)"/>
    <property type="match status" value="1"/>
</dbReference>
<dbReference type="PROSITE" id="PS50806">
    <property type="entry name" value="KRAB_RELATED"/>
    <property type="match status" value="1"/>
</dbReference>
<evidence type="ECO:0000255" key="1">
    <source>
        <dbReference type="PROSITE-ProRule" id="PRU00120"/>
    </source>
</evidence>
<evidence type="ECO:0000256" key="2">
    <source>
        <dbReference type="SAM" id="MobiDB-lite"/>
    </source>
</evidence>
<evidence type="ECO:0000269" key="3">
    <source>
    </source>
</evidence>
<evidence type="ECO:0000269" key="4">
    <source>
    </source>
</evidence>
<evidence type="ECO:0000303" key="5">
    <source>
    </source>
</evidence>
<evidence type="ECO:0000305" key="6"/>
<gene>
    <name type="primary">SSX5</name>
</gene>
<proteinExistence type="evidence at protein level"/>